<sequence length="408" mass="44654">MAFLSLHTSPMEQPGAGDAGGMNVYVRALAMALAESGVEVEIFTRSTKAGQPAVEHPGPGVCVHNVMAGPRRKLPKEELPELLHHMVEEIDRIRLQQLHGRYDAIHSHYWVSGVAGLELSELWGVPLVHTMHTMAKVKNLVLESGERPEPRRREEGEQRIVDGAARLVANTPAEADELVSHYGADLDRIDVAPPGVDLKVFTPSFRRKSRSLRGVRPDSFHILFAGRIQRLKGPQVFVKAAGILRKRRPDIDLEMTILGSLSGAKDFNLQHFIEDAGLADVVTHRPPVVAPELASWFRSADVVVMPSFSESFGLVALEAQACGTPVVATNVGGLSRAISDGRTGILVDGHHPSDWADALEDLYDDVQTREDMGRLAATHAESFGWQRTAAITLESYREAVSGLLVPRR</sequence>
<comment type="function">
    <text evidence="1">Catalyzes the transfer of a N-acetyl-glucosamine moiety to 1D-myo-inositol 3-phosphate to produce 1D-myo-inositol 2-acetamido-2-deoxy-glucopyranoside 3-phosphate in the mycothiol biosynthesis pathway.</text>
</comment>
<comment type="catalytic activity">
    <reaction evidence="1">
        <text>1D-myo-inositol 3-phosphate + UDP-N-acetyl-alpha-D-glucosamine = 1D-myo-inositol 2-acetamido-2-deoxy-alpha-D-glucopyranoside 3-phosphate + UDP + H(+)</text>
        <dbReference type="Rhea" id="RHEA:26188"/>
        <dbReference type="ChEBI" id="CHEBI:15378"/>
        <dbReference type="ChEBI" id="CHEBI:57705"/>
        <dbReference type="ChEBI" id="CHEBI:58223"/>
        <dbReference type="ChEBI" id="CHEBI:58401"/>
        <dbReference type="ChEBI" id="CHEBI:58892"/>
        <dbReference type="EC" id="2.4.1.250"/>
    </reaction>
</comment>
<comment type="subunit">
    <text evidence="1">Homodimer.</text>
</comment>
<comment type="similarity">
    <text evidence="1">Belongs to the glycosyltransferase group 1 family. MshA subfamily.</text>
</comment>
<proteinExistence type="inferred from homology"/>
<keyword id="KW-0328">Glycosyltransferase</keyword>
<keyword id="KW-0460">Magnesium</keyword>
<keyword id="KW-0479">Metal-binding</keyword>
<keyword id="KW-0808">Transferase</keyword>
<accession>A1R8N8</accession>
<feature type="chain" id="PRO_0000400109" description="D-inositol 3-phosphate glycosyltransferase">
    <location>
        <begin position="1"/>
        <end position="408"/>
    </location>
</feature>
<feature type="binding site" evidence="1">
    <location>
        <position position="7"/>
    </location>
    <ligand>
        <name>1D-myo-inositol 3-phosphate</name>
        <dbReference type="ChEBI" id="CHEBI:58401"/>
    </ligand>
</feature>
<feature type="binding site" evidence="1">
    <location>
        <begin position="13"/>
        <end position="14"/>
    </location>
    <ligand>
        <name>UDP-N-acetyl-alpha-D-glucosamine</name>
        <dbReference type="ChEBI" id="CHEBI:57705"/>
    </ligand>
</feature>
<feature type="binding site" evidence="1">
    <location>
        <begin position="18"/>
        <end position="23"/>
    </location>
    <ligand>
        <name>1D-myo-inositol 3-phosphate</name>
        <dbReference type="ChEBI" id="CHEBI:58401"/>
    </ligand>
</feature>
<feature type="binding site" evidence="1">
    <location>
        <position position="21"/>
    </location>
    <ligand>
        <name>UDP-N-acetyl-alpha-D-glucosamine</name>
        <dbReference type="ChEBI" id="CHEBI:57705"/>
    </ligand>
</feature>
<feature type="binding site" evidence="1">
    <location>
        <position position="76"/>
    </location>
    <ligand>
        <name>1D-myo-inositol 3-phosphate</name>
        <dbReference type="ChEBI" id="CHEBI:58401"/>
    </ligand>
</feature>
<feature type="binding site" evidence="1">
    <location>
        <position position="109"/>
    </location>
    <ligand>
        <name>1D-myo-inositol 3-phosphate</name>
        <dbReference type="ChEBI" id="CHEBI:58401"/>
    </ligand>
</feature>
<feature type="binding site" evidence="1">
    <location>
        <position position="133"/>
    </location>
    <ligand>
        <name>1D-myo-inositol 3-phosphate</name>
        <dbReference type="ChEBI" id="CHEBI:58401"/>
    </ligand>
</feature>
<feature type="binding site" evidence="1">
    <location>
        <position position="153"/>
    </location>
    <ligand>
        <name>1D-myo-inositol 3-phosphate</name>
        <dbReference type="ChEBI" id="CHEBI:58401"/>
    </ligand>
</feature>
<feature type="binding site" evidence="1">
    <location>
        <position position="227"/>
    </location>
    <ligand>
        <name>UDP-N-acetyl-alpha-D-glucosamine</name>
        <dbReference type="ChEBI" id="CHEBI:57705"/>
    </ligand>
</feature>
<feature type="binding site" evidence="1">
    <location>
        <position position="232"/>
    </location>
    <ligand>
        <name>UDP-N-acetyl-alpha-D-glucosamine</name>
        <dbReference type="ChEBI" id="CHEBI:57705"/>
    </ligand>
</feature>
<feature type="binding site" evidence="1">
    <location>
        <position position="288"/>
    </location>
    <ligand>
        <name>UDP-N-acetyl-alpha-D-glucosamine</name>
        <dbReference type="ChEBI" id="CHEBI:57705"/>
    </ligand>
</feature>
<feature type="binding site" evidence="1">
    <location>
        <position position="297"/>
    </location>
    <ligand>
        <name>Mg(2+)</name>
        <dbReference type="ChEBI" id="CHEBI:18420"/>
    </ligand>
</feature>
<feature type="binding site" evidence="1">
    <location>
        <position position="298"/>
    </location>
    <ligand>
        <name>Mg(2+)</name>
        <dbReference type="ChEBI" id="CHEBI:18420"/>
    </ligand>
</feature>
<feature type="binding site" evidence="1">
    <location>
        <position position="300"/>
    </location>
    <ligand>
        <name>Mg(2+)</name>
        <dbReference type="ChEBI" id="CHEBI:18420"/>
    </ligand>
</feature>
<feature type="binding site" evidence="1">
    <location>
        <position position="310"/>
    </location>
    <ligand>
        <name>UDP-N-acetyl-alpha-D-glucosamine</name>
        <dbReference type="ChEBI" id="CHEBI:57705"/>
    </ligand>
</feature>
<feature type="binding site" evidence="1">
    <location>
        <position position="318"/>
    </location>
    <ligand>
        <name>UDP-N-acetyl-alpha-D-glucosamine</name>
        <dbReference type="ChEBI" id="CHEBI:57705"/>
    </ligand>
</feature>
<feature type="binding site" evidence="1">
    <location>
        <position position="324"/>
    </location>
    <ligand>
        <name>Mg(2+)</name>
        <dbReference type="ChEBI" id="CHEBI:18420"/>
    </ligand>
</feature>
<organism>
    <name type="scientific">Paenarthrobacter aurescens (strain TC1)</name>
    <dbReference type="NCBI Taxonomy" id="290340"/>
    <lineage>
        <taxon>Bacteria</taxon>
        <taxon>Bacillati</taxon>
        <taxon>Actinomycetota</taxon>
        <taxon>Actinomycetes</taxon>
        <taxon>Micrococcales</taxon>
        <taxon>Micrococcaceae</taxon>
        <taxon>Paenarthrobacter</taxon>
    </lineage>
</organism>
<dbReference type="EC" id="2.4.1.250" evidence="1"/>
<dbReference type="EMBL" id="CP000474">
    <property type="protein sequence ID" value="ABM08761.1"/>
    <property type="molecule type" value="Genomic_DNA"/>
</dbReference>
<dbReference type="SMR" id="A1R8N8"/>
<dbReference type="STRING" id="290340.AAur_2891"/>
<dbReference type="CAZy" id="GT4">
    <property type="family name" value="Glycosyltransferase Family 4"/>
</dbReference>
<dbReference type="KEGG" id="aau:AAur_2891"/>
<dbReference type="eggNOG" id="COG0438">
    <property type="taxonomic scope" value="Bacteria"/>
</dbReference>
<dbReference type="HOGENOM" id="CLU_009583_2_3_11"/>
<dbReference type="Proteomes" id="UP000000637">
    <property type="component" value="Chromosome"/>
</dbReference>
<dbReference type="GO" id="GO:0008375">
    <property type="term" value="F:acetylglucosaminyltransferase activity"/>
    <property type="evidence" value="ECO:0007669"/>
    <property type="project" value="UniProtKB-UniRule"/>
</dbReference>
<dbReference type="GO" id="GO:0102710">
    <property type="term" value="F:D-inositol-3-phosphate glycosyltransferase activity"/>
    <property type="evidence" value="ECO:0007669"/>
    <property type="project" value="UniProtKB-EC"/>
</dbReference>
<dbReference type="GO" id="GO:0000287">
    <property type="term" value="F:magnesium ion binding"/>
    <property type="evidence" value="ECO:0007669"/>
    <property type="project" value="UniProtKB-UniRule"/>
</dbReference>
<dbReference type="GO" id="GO:0010125">
    <property type="term" value="P:mycothiol biosynthetic process"/>
    <property type="evidence" value="ECO:0007669"/>
    <property type="project" value="UniProtKB-UniRule"/>
</dbReference>
<dbReference type="Gene3D" id="3.40.50.2000">
    <property type="entry name" value="Glycogen Phosphorylase B"/>
    <property type="match status" value="2"/>
</dbReference>
<dbReference type="HAMAP" id="MF_01695">
    <property type="entry name" value="MshA"/>
    <property type="match status" value="1"/>
</dbReference>
<dbReference type="InterPro" id="IPR001296">
    <property type="entry name" value="Glyco_trans_1"/>
</dbReference>
<dbReference type="InterPro" id="IPR028098">
    <property type="entry name" value="Glyco_trans_4-like_N"/>
</dbReference>
<dbReference type="InterPro" id="IPR050194">
    <property type="entry name" value="Glycosyltransferase_grp1"/>
</dbReference>
<dbReference type="InterPro" id="IPR017814">
    <property type="entry name" value="Mycothiol_biosynthesis_MshA"/>
</dbReference>
<dbReference type="NCBIfam" id="TIGR03449">
    <property type="entry name" value="mycothiol_MshA"/>
    <property type="match status" value="1"/>
</dbReference>
<dbReference type="PANTHER" id="PTHR45947">
    <property type="entry name" value="SULFOQUINOVOSYL TRANSFERASE SQD2"/>
    <property type="match status" value="1"/>
</dbReference>
<dbReference type="PANTHER" id="PTHR45947:SF3">
    <property type="entry name" value="SULFOQUINOVOSYL TRANSFERASE SQD2"/>
    <property type="match status" value="1"/>
</dbReference>
<dbReference type="Pfam" id="PF13579">
    <property type="entry name" value="Glyco_trans_4_4"/>
    <property type="match status" value="1"/>
</dbReference>
<dbReference type="Pfam" id="PF00534">
    <property type="entry name" value="Glycos_transf_1"/>
    <property type="match status" value="1"/>
</dbReference>
<dbReference type="SUPFAM" id="SSF53756">
    <property type="entry name" value="UDP-Glycosyltransferase/glycogen phosphorylase"/>
    <property type="match status" value="1"/>
</dbReference>
<protein>
    <recommendedName>
        <fullName>D-inositol 3-phosphate glycosyltransferase</fullName>
        <ecNumber evidence="1">2.4.1.250</ecNumber>
    </recommendedName>
    <alternativeName>
        <fullName evidence="1">N-acetylglucosamine-inositol-phosphate N-acetylglucosaminyltransferase</fullName>
        <shortName evidence="1">GlcNAc-Ins-P N-acetylglucosaminyltransferase</shortName>
    </alternativeName>
</protein>
<evidence type="ECO:0000255" key="1">
    <source>
        <dbReference type="HAMAP-Rule" id="MF_01695"/>
    </source>
</evidence>
<name>MSHA_PAEAT</name>
<gene>
    <name evidence="1" type="primary">mshA</name>
    <name type="ordered locus">AAur_2891</name>
</gene>
<reference key="1">
    <citation type="journal article" date="2006" name="PLoS Genet.">
        <title>Secrets of soil survival revealed by the genome sequence of Arthrobacter aurescens TC1.</title>
        <authorList>
            <person name="Mongodin E.F."/>
            <person name="Shapir N."/>
            <person name="Daugherty S.C."/>
            <person name="DeBoy R.T."/>
            <person name="Emerson J.B."/>
            <person name="Shvartzbeyn A."/>
            <person name="Radune D."/>
            <person name="Vamathevan J."/>
            <person name="Riggs F."/>
            <person name="Grinberg V."/>
            <person name="Khouri H.M."/>
            <person name="Wackett L.P."/>
            <person name="Nelson K.E."/>
            <person name="Sadowsky M.J."/>
        </authorList>
    </citation>
    <scope>NUCLEOTIDE SEQUENCE [LARGE SCALE GENOMIC DNA]</scope>
    <source>
        <strain>TC1</strain>
    </source>
</reference>